<dbReference type="EMBL" id="Y15949">
    <property type="protein sequence ID" value="CAA75902.1"/>
    <property type="molecule type" value="Genomic_DNA"/>
</dbReference>
<dbReference type="SMR" id="O77714"/>
<dbReference type="GO" id="GO:0016324">
    <property type="term" value="C:apical plasma membrane"/>
    <property type="evidence" value="ECO:0000250"/>
    <property type="project" value="UniProtKB"/>
</dbReference>
<dbReference type="GO" id="GO:0016323">
    <property type="term" value="C:basolateral plasma membrane"/>
    <property type="evidence" value="ECO:0007669"/>
    <property type="project" value="UniProtKB-SubCell"/>
</dbReference>
<dbReference type="GO" id="GO:0030659">
    <property type="term" value="C:cytoplasmic vesicle membrane"/>
    <property type="evidence" value="ECO:0007669"/>
    <property type="project" value="UniProtKB-SubCell"/>
</dbReference>
<dbReference type="GO" id="GO:0005794">
    <property type="term" value="C:Golgi apparatus"/>
    <property type="evidence" value="ECO:0007669"/>
    <property type="project" value="UniProtKB-SubCell"/>
</dbReference>
<dbReference type="GO" id="GO:0005886">
    <property type="term" value="C:plasma membrane"/>
    <property type="evidence" value="ECO:0000250"/>
    <property type="project" value="UniProtKB"/>
</dbReference>
<dbReference type="GO" id="GO:0015250">
    <property type="term" value="F:water channel activity"/>
    <property type="evidence" value="ECO:0000250"/>
    <property type="project" value="UniProtKB"/>
</dbReference>
<dbReference type="GO" id="GO:0051289">
    <property type="term" value="P:protein homotetramerization"/>
    <property type="evidence" value="ECO:0000250"/>
    <property type="project" value="UniProtKB"/>
</dbReference>
<dbReference type="GO" id="GO:0006833">
    <property type="term" value="P:water transport"/>
    <property type="evidence" value="ECO:0000250"/>
    <property type="project" value="UniProtKB"/>
</dbReference>
<dbReference type="FunFam" id="1.20.1080.10:FF:000032">
    <property type="entry name" value="Aquaporin-2"/>
    <property type="match status" value="1"/>
</dbReference>
<dbReference type="Gene3D" id="1.20.1080.10">
    <property type="entry name" value="Glycerol uptake facilitator protein"/>
    <property type="match status" value="1"/>
</dbReference>
<dbReference type="InterPro" id="IPR023271">
    <property type="entry name" value="Aquaporin-like"/>
</dbReference>
<dbReference type="InterPro" id="IPR034294">
    <property type="entry name" value="Aquaporin_transptr"/>
</dbReference>
<dbReference type="InterPro" id="IPR000425">
    <property type="entry name" value="MIP"/>
</dbReference>
<dbReference type="InterPro" id="IPR022357">
    <property type="entry name" value="MIP_CS"/>
</dbReference>
<dbReference type="PANTHER" id="PTHR19139">
    <property type="entry name" value="AQUAPORIN TRANSPORTER"/>
    <property type="match status" value="1"/>
</dbReference>
<dbReference type="PANTHER" id="PTHR19139:SF45">
    <property type="entry name" value="AQUAPORIN-2"/>
    <property type="match status" value="1"/>
</dbReference>
<dbReference type="Pfam" id="PF00230">
    <property type="entry name" value="MIP"/>
    <property type="match status" value="1"/>
</dbReference>
<dbReference type="PRINTS" id="PR02014">
    <property type="entry name" value="AQUAPORIN2"/>
</dbReference>
<dbReference type="PRINTS" id="PR00783">
    <property type="entry name" value="MINTRINSICP"/>
</dbReference>
<dbReference type="SUPFAM" id="SSF81338">
    <property type="entry name" value="Aquaporin-like"/>
    <property type="match status" value="1"/>
</dbReference>
<dbReference type="PROSITE" id="PS00221">
    <property type="entry name" value="MIP"/>
    <property type="match status" value="1"/>
</dbReference>
<feature type="chain" id="PRO_0000063930" description="Aquaporin-2">
    <location>
        <begin position="1" status="less than"/>
        <end position="109" status="greater than"/>
    </location>
</feature>
<feature type="topological domain" description="Cytoplasmic" evidence="3">
    <location>
        <begin position="1" status="less than"/>
        <end position="6"/>
    </location>
</feature>
<feature type="transmembrane region" description="Helical" evidence="2">
    <location>
        <begin position="7"/>
        <end position="27"/>
    </location>
</feature>
<feature type="topological domain" description="Extracellular" evidence="3">
    <location>
        <begin position="28"/>
        <end position="35"/>
    </location>
</feature>
<feature type="transmembrane region" description="Helical" evidence="2">
    <location>
        <begin position="36"/>
        <end position="54"/>
    </location>
</feature>
<feature type="topological domain" description="Cytoplasmic" evidence="3">
    <location>
        <begin position="55"/>
        <end position="59"/>
    </location>
</feature>
<feature type="intramembrane region" description="Discontinuously helical" evidence="2">
    <location>
        <begin position="60"/>
        <end position="69"/>
    </location>
</feature>
<feature type="topological domain" description="Cytoplasmic" evidence="3">
    <location>
        <begin position="70"/>
        <end position="80"/>
    </location>
</feature>
<feature type="transmembrane region" description="Helical" evidence="2">
    <location>
        <begin position="81"/>
        <end position="102"/>
    </location>
</feature>
<feature type="topological domain" description="Extracellular" evidence="3">
    <location>
        <begin position="103"/>
        <end position="109" status="greater than"/>
    </location>
</feature>
<feature type="short sequence motif" description="NPA 1" evidence="2">
    <location>
        <begin position="63"/>
        <end position="65"/>
    </location>
</feature>
<feature type="non-terminal residue">
    <location>
        <position position="1"/>
    </location>
</feature>
<feature type="non-terminal residue">
    <location>
        <position position="109"/>
    </location>
</feature>
<evidence type="ECO:0000250" key="1">
    <source>
        <dbReference type="UniProtKB" id="P34080"/>
    </source>
</evidence>
<evidence type="ECO:0000250" key="2">
    <source>
        <dbReference type="UniProtKB" id="P41181"/>
    </source>
</evidence>
<evidence type="ECO:0000305" key="3"/>
<organism>
    <name type="scientific">Dugong dugon</name>
    <name type="common">Dugong</name>
    <name type="synonym">Trichechus dugon</name>
    <dbReference type="NCBI Taxonomy" id="29137"/>
    <lineage>
        <taxon>Eukaryota</taxon>
        <taxon>Metazoa</taxon>
        <taxon>Chordata</taxon>
        <taxon>Craniata</taxon>
        <taxon>Vertebrata</taxon>
        <taxon>Euteleostomi</taxon>
        <taxon>Mammalia</taxon>
        <taxon>Eutheria</taxon>
        <taxon>Afrotheria</taxon>
        <taxon>Sirenia</taxon>
        <taxon>Dugongidae</taxon>
        <taxon>Dugong</taxon>
    </lineage>
</organism>
<keyword id="KW-1003">Cell membrane</keyword>
<keyword id="KW-0968">Cytoplasmic vesicle</keyword>
<keyword id="KW-0325">Glycoprotein</keyword>
<keyword id="KW-0333">Golgi apparatus</keyword>
<keyword id="KW-0472">Membrane</keyword>
<keyword id="KW-0597">Phosphoprotein</keyword>
<keyword id="KW-0812">Transmembrane</keyword>
<keyword id="KW-1133">Transmembrane helix</keyword>
<keyword id="KW-0813">Transport</keyword>
<protein>
    <recommendedName>
        <fullName evidence="3">Aquaporin-2</fullName>
        <shortName>AQP-2</shortName>
    </recommendedName>
    <alternativeName>
        <fullName>ADH water channel</fullName>
    </alternativeName>
    <alternativeName>
        <fullName>Aquaporin-CD</fullName>
        <shortName>AQP-CD</shortName>
    </alternativeName>
    <alternativeName>
        <fullName>Collecting duct water channel protein</fullName>
    </alternativeName>
    <alternativeName>
        <fullName>WCH-CD</fullName>
    </alternativeName>
    <alternativeName>
        <fullName>Water channel protein for renal collecting duct</fullName>
    </alternativeName>
</protein>
<sequence length="109" mass="11290">SIAFSRAVFSEFLATLLFVFFGLGSALNWPQALPSVLQIAMAFGLAIGTLVQALGHISGAHINPAVTVACLVGCHVSFLRATFYLAAQLLGAVAGAAILHEITPPDIRG</sequence>
<proteinExistence type="inferred from homology"/>
<gene>
    <name evidence="2" type="primary">AQP2</name>
</gene>
<comment type="function">
    <text evidence="2">Forms a water-specific channel that provides the plasma membranes of renal collecting duct with high permeability to water, thereby permitting water to move in the direction of an osmotic gradient. Plays an essential role in renal water homeostasis. Could also be permeable to glycerol.</text>
</comment>
<comment type="catalytic activity">
    <reaction evidence="2">
        <text>H2O(in) = H2O(out)</text>
        <dbReference type="Rhea" id="RHEA:29667"/>
        <dbReference type="ChEBI" id="CHEBI:15377"/>
    </reaction>
</comment>
<comment type="catalytic activity">
    <reaction evidence="2">
        <text>glycerol(in) = glycerol(out)</text>
        <dbReference type="Rhea" id="RHEA:29675"/>
        <dbReference type="ChEBI" id="CHEBI:17754"/>
    </reaction>
</comment>
<comment type="subunit">
    <text evidence="2">Homotetramer.</text>
</comment>
<comment type="subcellular location">
    <subcellularLocation>
        <location evidence="2">Apical cell membrane</location>
        <topology evidence="2">Multi-pass membrane protein</topology>
    </subcellularLocation>
    <subcellularLocation>
        <location evidence="1">Basolateral cell membrane</location>
        <topology evidence="2">Multi-pass membrane protein</topology>
    </subcellularLocation>
    <subcellularLocation>
        <location evidence="2">Cell membrane</location>
        <topology evidence="2">Multi-pass membrane protein</topology>
    </subcellularLocation>
    <subcellularLocation>
        <location evidence="2">Cytoplasmic vesicle membrane</location>
        <topology evidence="2">Multi-pass membrane protein</topology>
    </subcellularLocation>
    <subcellularLocation>
        <location evidence="2">Golgi apparatus</location>
        <location evidence="2">trans-Golgi network membrane</location>
        <topology evidence="2">Multi-pass membrane protein</topology>
    </subcellularLocation>
    <text evidence="2">Shuttles from vesicles to the apical membrane. Vasopressin-regulated phosphorylation is required for translocation to the apical cell membrane. PLEKHA8/FAPP2 is required to transport AQP2 from the TGN to sites where AQP2 is phosphorylated.</text>
</comment>
<comment type="domain">
    <text evidence="2">Aquaporins contain two tandem repeats each containing three membrane-spanning domains and a pore-forming loop with the signature motif Asn-Pro-Ala (NPA).</text>
</comment>
<comment type="PTM">
    <text evidence="2">Serine phosphorylation is necessary and sufficient for expression at the apical membrane. Endocytosis is not phosphorylation-dependent.</text>
</comment>
<comment type="PTM">
    <text evidence="2">N-glycosylated.</text>
</comment>
<comment type="similarity">
    <text evidence="3">Belongs to the MIP/aquaporin (TC 1.A.8) family.</text>
</comment>
<reference key="1">
    <citation type="journal article" date="1998" name="Mol. Phylogenet. Evol.">
        <title>Highly congruent molecular support for a diverse superordinal clade of endemic African mammals.</title>
        <authorList>
            <person name="Stanhope M.J."/>
            <person name="Madsen O.J."/>
            <person name="Waddell V.G."/>
            <person name="Cleven G.C."/>
            <person name="de Jong W.W."/>
            <person name="Springer M.S."/>
        </authorList>
    </citation>
    <scope>NUCLEOTIDE SEQUENCE [GENOMIC DNA]</scope>
</reference>
<accession>O77714</accession>
<name>AQP2_DUGDU</name>